<name>RF2_BURPS</name>
<comment type="function">
    <text evidence="2">Peptide chain release factor 2 directs the termination of translation in response to the peptide chain termination codons UGA and UAA.</text>
</comment>
<comment type="subcellular location">
    <subcellularLocation>
        <location evidence="2">Cytoplasm</location>
    </subcellularLocation>
</comment>
<comment type="PTM">
    <text evidence="2">Methylated by PrmC. Methylation increases the termination efficiency of RF2.</text>
</comment>
<comment type="miscellaneous">
    <text evidence="1">The gene for this protein contains a UGA in-frame termination codon after Leu-27; a naturally occurring frameshift enables complete translation of RF-2. This provides a mechanism for the protein to regulate its own production (By similarity).</text>
</comment>
<comment type="similarity">
    <text evidence="2">Belongs to the prokaryotic/mitochondrial release factor family.</text>
</comment>
<dbReference type="EMBL" id="BX571965">
    <property type="protein sequence ID" value="CAH36283.1"/>
    <property type="molecule type" value="Genomic_DNA"/>
</dbReference>
<dbReference type="RefSeq" id="WP_004199566.1">
    <property type="nucleotide sequence ID" value="NZ_CP009538.1"/>
</dbReference>
<dbReference type="RefSeq" id="YP_108876.1">
    <property type="nucleotide sequence ID" value="NC_006350.1"/>
</dbReference>
<dbReference type="SMR" id="Q63SP0"/>
<dbReference type="STRING" id="272560.BPSL2280"/>
<dbReference type="GeneID" id="93060837"/>
<dbReference type="KEGG" id="bps:BPSL2280"/>
<dbReference type="PATRIC" id="fig|272560.6.peg.2590"/>
<dbReference type="eggNOG" id="COG1186">
    <property type="taxonomic scope" value="Bacteria"/>
</dbReference>
<dbReference type="Proteomes" id="UP000000605">
    <property type="component" value="Chromosome 1"/>
</dbReference>
<dbReference type="GO" id="GO:0005737">
    <property type="term" value="C:cytoplasm"/>
    <property type="evidence" value="ECO:0007669"/>
    <property type="project" value="UniProtKB-SubCell"/>
</dbReference>
<dbReference type="GO" id="GO:0016149">
    <property type="term" value="F:translation release factor activity, codon specific"/>
    <property type="evidence" value="ECO:0007669"/>
    <property type="project" value="UniProtKB-UniRule"/>
</dbReference>
<dbReference type="GO" id="GO:0075523">
    <property type="term" value="P:viral translational frameshifting"/>
    <property type="evidence" value="ECO:0007669"/>
    <property type="project" value="UniProtKB-KW"/>
</dbReference>
<dbReference type="FunFam" id="3.30.160.20:FF:000010">
    <property type="entry name" value="Peptide chain release factor 2"/>
    <property type="match status" value="1"/>
</dbReference>
<dbReference type="Gene3D" id="3.30.160.20">
    <property type="match status" value="1"/>
</dbReference>
<dbReference type="Gene3D" id="3.30.70.1660">
    <property type="match status" value="1"/>
</dbReference>
<dbReference type="Gene3D" id="1.20.58.410">
    <property type="entry name" value="Release factor"/>
    <property type="match status" value="1"/>
</dbReference>
<dbReference type="HAMAP" id="MF_00094">
    <property type="entry name" value="Rel_fac_2"/>
    <property type="match status" value="1"/>
</dbReference>
<dbReference type="InterPro" id="IPR005139">
    <property type="entry name" value="PCRF"/>
</dbReference>
<dbReference type="InterPro" id="IPR000352">
    <property type="entry name" value="Pep_chain_release_fac_I"/>
</dbReference>
<dbReference type="InterPro" id="IPR045853">
    <property type="entry name" value="Pep_chain_release_fac_I_sf"/>
</dbReference>
<dbReference type="InterPro" id="IPR004374">
    <property type="entry name" value="PrfB"/>
</dbReference>
<dbReference type="NCBIfam" id="TIGR00020">
    <property type="entry name" value="prfB"/>
    <property type="match status" value="1"/>
</dbReference>
<dbReference type="PANTHER" id="PTHR43116:SF3">
    <property type="entry name" value="CLASS I PEPTIDE CHAIN RELEASE FACTOR"/>
    <property type="match status" value="1"/>
</dbReference>
<dbReference type="PANTHER" id="PTHR43116">
    <property type="entry name" value="PEPTIDE CHAIN RELEASE FACTOR 2"/>
    <property type="match status" value="1"/>
</dbReference>
<dbReference type="Pfam" id="PF03462">
    <property type="entry name" value="PCRF"/>
    <property type="match status" value="1"/>
</dbReference>
<dbReference type="Pfam" id="PF00472">
    <property type="entry name" value="RF-1"/>
    <property type="match status" value="1"/>
</dbReference>
<dbReference type="SMART" id="SM00937">
    <property type="entry name" value="PCRF"/>
    <property type="match status" value="1"/>
</dbReference>
<dbReference type="SUPFAM" id="SSF75620">
    <property type="entry name" value="Release factor"/>
    <property type="match status" value="1"/>
</dbReference>
<dbReference type="PROSITE" id="PS00745">
    <property type="entry name" value="RF_PROK_I"/>
    <property type="match status" value="1"/>
</dbReference>
<sequence length="367" mass="41091">MEAERLNAIESSLADLRRRAGELRGYLDYDVKSERLAEVNKQLEDPNVWNDSKNAQALGREKKSLESVVTTLTALDNDLRDAQDLFELAHEEGDEETLVATESDAAKLEARVADIEFRRMFSNPADPNNCFIDIQAGAGGTEACDWASMLLRQYLRYCERKGFKAEVLEESDGDVAGIKNATIKVSGEYAYGYLRTETGIHRLVRKSPFDSSGGRHTSFSSVFVYPEIDDSIEVEINPADLRIDTYRASGAGGQHINKTDSAVRITHMPTGIVVQCQNDRSQHRNRAEAMAMLKSRLFEAELRKRQAEQDKLESSKTDVGWGHQIRSYVLDQSRVKDLRTNVEMSNTKAVLDGDLDDFISASLKQGV</sequence>
<protein>
    <recommendedName>
        <fullName evidence="2">Peptide chain release factor 2</fullName>
        <shortName evidence="2">RF-2</shortName>
    </recommendedName>
</protein>
<gene>
    <name evidence="2" type="primary">prfB</name>
    <name type="ordered locus">BPSL2280</name>
</gene>
<reference key="1">
    <citation type="journal article" date="2004" name="Proc. Natl. Acad. Sci. U.S.A.">
        <title>Genomic plasticity of the causative agent of melioidosis, Burkholderia pseudomallei.</title>
        <authorList>
            <person name="Holden M.T.G."/>
            <person name="Titball R.W."/>
            <person name="Peacock S.J."/>
            <person name="Cerdeno-Tarraga A.-M."/>
            <person name="Atkins T."/>
            <person name="Crossman L.C."/>
            <person name="Pitt T."/>
            <person name="Churcher C."/>
            <person name="Mungall K.L."/>
            <person name="Bentley S.D."/>
            <person name="Sebaihia M."/>
            <person name="Thomson N.R."/>
            <person name="Bason N."/>
            <person name="Beacham I.R."/>
            <person name="Brooks K."/>
            <person name="Brown K.A."/>
            <person name="Brown N.F."/>
            <person name="Challis G.L."/>
            <person name="Cherevach I."/>
            <person name="Chillingworth T."/>
            <person name="Cronin A."/>
            <person name="Crossett B."/>
            <person name="Davis P."/>
            <person name="DeShazer D."/>
            <person name="Feltwell T."/>
            <person name="Fraser A."/>
            <person name="Hance Z."/>
            <person name="Hauser H."/>
            <person name="Holroyd S."/>
            <person name="Jagels K."/>
            <person name="Keith K.E."/>
            <person name="Maddison M."/>
            <person name="Moule S."/>
            <person name="Price C."/>
            <person name="Quail M.A."/>
            <person name="Rabbinowitsch E."/>
            <person name="Rutherford K."/>
            <person name="Sanders M."/>
            <person name="Simmonds M."/>
            <person name="Songsivilai S."/>
            <person name="Stevens K."/>
            <person name="Tumapa S."/>
            <person name="Vesaratchavest M."/>
            <person name="Whitehead S."/>
            <person name="Yeats C."/>
            <person name="Barrell B.G."/>
            <person name="Oyston P.C.F."/>
            <person name="Parkhill J."/>
        </authorList>
    </citation>
    <scope>NUCLEOTIDE SEQUENCE [LARGE SCALE GENOMIC DNA]</scope>
    <source>
        <strain>K96243</strain>
    </source>
</reference>
<proteinExistence type="inferred from homology"/>
<organism>
    <name type="scientific">Burkholderia pseudomallei (strain K96243)</name>
    <dbReference type="NCBI Taxonomy" id="272560"/>
    <lineage>
        <taxon>Bacteria</taxon>
        <taxon>Pseudomonadati</taxon>
        <taxon>Pseudomonadota</taxon>
        <taxon>Betaproteobacteria</taxon>
        <taxon>Burkholderiales</taxon>
        <taxon>Burkholderiaceae</taxon>
        <taxon>Burkholderia</taxon>
        <taxon>pseudomallei group</taxon>
    </lineage>
</organism>
<feature type="chain" id="PRO_1000004977" description="Peptide chain release factor 2">
    <location>
        <begin position="1"/>
        <end position="367"/>
    </location>
</feature>
<feature type="modified residue" description="N5-methylglutamine" evidence="2">
    <location>
        <position position="254"/>
    </location>
</feature>
<evidence type="ECO:0000250" key="1"/>
<evidence type="ECO:0000255" key="2">
    <source>
        <dbReference type="HAMAP-Rule" id="MF_00094"/>
    </source>
</evidence>
<accession>Q63SP0</accession>
<keyword id="KW-0963">Cytoplasm</keyword>
<keyword id="KW-0488">Methylation</keyword>
<keyword id="KW-0648">Protein biosynthesis</keyword>
<keyword id="KW-1185">Reference proteome</keyword>
<keyword id="KW-0688">Ribosomal frameshifting</keyword>